<keyword id="KW-0507">mRNA processing</keyword>
<keyword id="KW-0508">mRNA splicing</keyword>
<keyword id="KW-0539">Nucleus</keyword>
<keyword id="KW-1185">Reference proteome</keyword>
<keyword id="KW-0677">Repeat</keyword>
<keyword id="KW-0694">RNA-binding</keyword>
<protein>
    <recommendedName>
        <fullName>Splicing factor U2af large subunit B</fullName>
    </recommendedName>
    <alternativeName>
        <fullName>U2 auxiliary factor 65 kDa subunit B</fullName>
    </alternativeName>
    <alternativeName>
        <fullName>U2 small nuclear ribonucleoprotein auxiliary factor large subunit B</fullName>
        <shortName>U2 snRNP auxiliary factor large subunit B</shortName>
    </alternativeName>
</protein>
<name>U2A2B_WHEAT</name>
<reference key="1">
    <citation type="journal article" date="2006" name="Plant Mol. Biol.">
        <title>Systematic identification of factors involved in post-transcriptional processes in wheat grain.</title>
        <authorList>
            <person name="Lopato S."/>
            <person name="Borisjuk L."/>
            <person name="Milligan A.S."/>
            <person name="Shirley N."/>
            <person name="Bazanova N."/>
            <person name="Langridge P."/>
        </authorList>
    </citation>
    <scope>NUCLEOTIDE SEQUENCE [MRNA]</scope>
    <source>
        <strain>cv. Chinese Spring</strain>
        <tissue>Grain</tissue>
    </source>
</reference>
<proteinExistence type="evidence at transcript level"/>
<accession>Q2QKB4</accession>
<evidence type="ECO:0000250" key="1"/>
<evidence type="ECO:0000255" key="2">
    <source>
        <dbReference type="PROSITE-ProRule" id="PRU00176"/>
    </source>
</evidence>
<evidence type="ECO:0000256" key="3">
    <source>
        <dbReference type="SAM" id="MobiDB-lite"/>
    </source>
</evidence>
<evidence type="ECO:0000305" key="4"/>
<gene>
    <name type="primary">U2AF65B</name>
    <name type="synonym">U2AF65</name>
</gene>
<dbReference type="EMBL" id="DQ019635">
    <property type="protein sequence ID" value="AAY84880.1"/>
    <property type="molecule type" value="mRNA"/>
</dbReference>
<dbReference type="SMR" id="Q2QKB4"/>
<dbReference type="STRING" id="4565.Q2QKB4"/>
<dbReference type="PaxDb" id="4565-Traes_4DS_FABA6C874.2"/>
<dbReference type="eggNOG" id="KOG0120">
    <property type="taxonomic scope" value="Eukaryota"/>
</dbReference>
<dbReference type="Proteomes" id="UP000019116">
    <property type="component" value="Unplaced"/>
</dbReference>
<dbReference type="ExpressionAtlas" id="Q2QKB4">
    <property type="expression patterns" value="baseline and differential"/>
</dbReference>
<dbReference type="GO" id="GO:0000243">
    <property type="term" value="C:commitment complex"/>
    <property type="evidence" value="ECO:0000318"/>
    <property type="project" value="GO_Central"/>
</dbReference>
<dbReference type="GO" id="GO:0016607">
    <property type="term" value="C:nuclear speck"/>
    <property type="evidence" value="ECO:0000318"/>
    <property type="project" value="GO_Central"/>
</dbReference>
<dbReference type="GO" id="GO:0071004">
    <property type="term" value="C:U2-type prespliceosome"/>
    <property type="evidence" value="ECO:0000318"/>
    <property type="project" value="GO_Central"/>
</dbReference>
<dbReference type="GO" id="GO:0089701">
    <property type="term" value="C:U2AF complex"/>
    <property type="evidence" value="ECO:0000318"/>
    <property type="project" value="GO_Central"/>
</dbReference>
<dbReference type="GO" id="GO:0008187">
    <property type="term" value="F:poly-pyrimidine tract binding"/>
    <property type="evidence" value="ECO:0000318"/>
    <property type="project" value="GO_Central"/>
</dbReference>
<dbReference type="GO" id="GO:0030628">
    <property type="term" value="F:pre-mRNA 3'-splice site binding"/>
    <property type="evidence" value="ECO:0000318"/>
    <property type="project" value="GO_Central"/>
</dbReference>
<dbReference type="GO" id="GO:0000245">
    <property type="term" value="P:spliceosomal complex assembly"/>
    <property type="evidence" value="ECO:0000318"/>
    <property type="project" value="GO_Central"/>
</dbReference>
<dbReference type="CDD" id="cd12230">
    <property type="entry name" value="RRM1_U2AF65"/>
    <property type="match status" value="1"/>
</dbReference>
<dbReference type="CDD" id="cd12231">
    <property type="entry name" value="RRM2_U2AF65"/>
    <property type="match status" value="1"/>
</dbReference>
<dbReference type="CDD" id="cd12232">
    <property type="entry name" value="RRM3_U2AF65"/>
    <property type="match status" value="1"/>
</dbReference>
<dbReference type="FunFam" id="3.30.70.330:FF:000057">
    <property type="entry name" value="U2 snRNP auxiliary factor large subunit"/>
    <property type="match status" value="1"/>
</dbReference>
<dbReference type="FunFam" id="3.30.70.330:FF:000111">
    <property type="entry name" value="U2 snRNP auxiliary factor large subunit"/>
    <property type="match status" value="1"/>
</dbReference>
<dbReference type="FunFam" id="3.30.70.330:FF:000225">
    <property type="entry name" value="U2 snRNP auxiliary factor large subunit"/>
    <property type="match status" value="1"/>
</dbReference>
<dbReference type="Gene3D" id="3.30.70.330">
    <property type="match status" value="3"/>
</dbReference>
<dbReference type="InterPro" id="IPR012677">
    <property type="entry name" value="Nucleotide-bd_a/b_plait_sf"/>
</dbReference>
<dbReference type="InterPro" id="IPR035979">
    <property type="entry name" value="RBD_domain_sf"/>
</dbReference>
<dbReference type="InterPro" id="IPR000504">
    <property type="entry name" value="RRM_dom"/>
</dbReference>
<dbReference type="InterPro" id="IPR006529">
    <property type="entry name" value="U2AF_lg"/>
</dbReference>
<dbReference type="NCBIfam" id="TIGR01642">
    <property type="entry name" value="U2AF_lg"/>
    <property type="match status" value="1"/>
</dbReference>
<dbReference type="PANTHER" id="PTHR23139">
    <property type="entry name" value="RNA-BINDING PROTEIN"/>
    <property type="match status" value="1"/>
</dbReference>
<dbReference type="Pfam" id="PF00076">
    <property type="entry name" value="RRM_1"/>
    <property type="match status" value="1"/>
</dbReference>
<dbReference type="SMART" id="SM00360">
    <property type="entry name" value="RRM"/>
    <property type="match status" value="3"/>
</dbReference>
<dbReference type="SUPFAM" id="SSF54928">
    <property type="entry name" value="RNA-binding domain, RBD"/>
    <property type="match status" value="2"/>
</dbReference>
<dbReference type="PROSITE" id="PS50102">
    <property type="entry name" value="RRM"/>
    <property type="match status" value="2"/>
</dbReference>
<organism>
    <name type="scientific">Triticum aestivum</name>
    <name type="common">Wheat</name>
    <dbReference type="NCBI Taxonomy" id="4565"/>
    <lineage>
        <taxon>Eukaryota</taxon>
        <taxon>Viridiplantae</taxon>
        <taxon>Streptophyta</taxon>
        <taxon>Embryophyta</taxon>
        <taxon>Tracheophyta</taxon>
        <taxon>Spermatophyta</taxon>
        <taxon>Magnoliopsida</taxon>
        <taxon>Liliopsida</taxon>
        <taxon>Poales</taxon>
        <taxon>Poaceae</taxon>
        <taxon>BOP clade</taxon>
        <taxon>Pooideae</taxon>
        <taxon>Triticodae</taxon>
        <taxon>Triticeae</taxon>
        <taxon>Triticinae</taxon>
        <taxon>Triticum</taxon>
    </lineage>
</organism>
<sequence length="543" mass="60586">MADDNGGGGDDYVSEAVRPEGDTHTREEGLSKSRDRDREKDKDKERHRDRDRDRGRDRDRGRDRDLDKDRDRDKDRDRHQRHHRDKREHRDRPDDHDRHRSRDSERRRDRERDGHRRHRSRSRSRSRGRDDHRSRSHSKSKRVSGFDLGPTAQSVLPQFPTIPTPSQLPGSSIPGMFPNMLPFADGQINPLVMQPQAMTQQATRHARRVYVGGLPPSANEQSVAIYFNQVMAAIGGNTAGPGDAVLNVYINHDKKFAFVEMRSVEEASNAMALDGILFEGAPVKVRRPTDYNPSLAAALGPSQPSSNLNLAAVGLTPGSAGGLEGPDRIFVGGLPYYFTEAQVRELLESFGPLRGFDLVKDRETGNSKGYAFCVYQDLNVTDIACAALNGIKMGDKTLTVRRANQGSAQPRPEQENILLQAQQQVQLQKLVYQVGALPTKVVCLTQVVTADELKDDEEYEDIMEDMRLEAGKYGNLVKVVIPRPHPSGEPVSGVGKVFLEYADVDGSTKAKTAMHGRKFGGNPVVAVFYPENKFADEDYDAAA</sequence>
<feature type="chain" id="PRO_0000352274" description="Splicing factor U2af large subunit B">
    <location>
        <begin position="1"/>
        <end position="543"/>
    </location>
</feature>
<feature type="domain" description="RRM 1" evidence="2">
    <location>
        <begin position="207"/>
        <end position="290"/>
    </location>
</feature>
<feature type="domain" description="RRM 2" evidence="2">
    <location>
        <begin position="327"/>
        <end position="405"/>
    </location>
</feature>
<feature type="domain" description="RRM 3" evidence="2">
    <location>
        <begin position="446"/>
        <end position="532"/>
    </location>
</feature>
<feature type="region of interest" description="Disordered" evidence="3">
    <location>
        <begin position="1"/>
        <end position="171"/>
    </location>
</feature>
<feature type="compositionally biased region" description="Gly residues" evidence="3">
    <location>
        <begin position="1"/>
        <end position="10"/>
    </location>
</feature>
<feature type="compositionally biased region" description="Basic and acidic residues" evidence="3">
    <location>
        <begin position="17"/>
        <end position="78"/>
    </location>
</feature>
<feature type="compositionally biased region" description="Basic and acidic residues" evidence="3">
    <location>
        <begin position="88"/>
        <end position="114"/>
    </location>
</feature>
<feature type="compositionally biased region" description="Basic residues" evidence="3">
    <location>
        <begin position="115"/>
        <end position="126"/>
    </location>
</feature>
<comment type="function">
    <text evidence="1">Necessary for the splicing of pre-mRNA.</text>
</comment>
<comment type="subcellular location">
    <subcellularLocation>
        <location evidence="1">Nucleus</location>
    </subcellularLocation>
</comment>
<comment type="domain">
    <text>N-terminal RS domain has a very strong bias in favor of D over S.</text>
</comment>
<comment type="similarity">
    <text evidence="4">Belongs to the splicing factor SR family.</text>
</comment>